<comment type="function">
    <text evidence="1">Specifically dimethylates two adjacent adenosines (A1518 and A1519) in the loop of a conserved hairpin near the 3'-end of 16S rRNA in the 30S particle. May play a critical role in biogenesis of 30S subunits.</text>
</comment>
<comment type="catalytic activity">
    <reaction evidence="1">
        <text>adenosine(1518)/adenosine(1519) in 16S rRNA + 4 S-adenosyl-L-methionine = N(6)-dimethyladenosine(1518)/N(6)-dimethyladenosine(1519) in 16S rRNA + 4 S-adenosyl-L-homocysteine + 4 H(+)</text>
        <dbReference type="Rhea" id="RHEA:19609"/>
        <dbReference type="Rhea" id="RHEA-COMP:10232"/>
        <dbReference type="Rhea" id="RHEA-COMP:10233"/>
        <dbReference type="ChEBI" id="CHEBI:15378"/>
        <dbReference type="ChEBI" id="CHEBI:57856"/>
        <dbReference type="ChEBI" id="CHEBI:59789"/>
        <dbReference type="ChEBI" id="CHEBI:74411"/>
        <dbReference type="ChEBI" id="CHEBI:74493"/>
        <dbReference type="EC" id="2.1.1.182"/>
    </reaction>
</comment>
<comment type="subcellular location">
    <subcellularLocation>
        <location evidence="1">Cytoplasm</location>
    </subcellularLocation>
</comment>
<comment type="similarity">
    <text evidence="1">Belongs to the class I-like SAM-binding methyltransferase superfamily. rRNA adenine N(6)-methyltransferase family. RsmA subfamily.</text>
</comment>
<proteinExistence type="inferred from homology"/>
<dbReference type="EC" id="2.1.1.182" evidence="1"/>
<dbReference type="EMBL" id="CP000633">
    <property type="protein sequence ID" value="ACM36099.1"/>
    <property type="molecule type" value="Genomic_DNA"/>
</dbReference>
<dbReference type="RefSeq" id="WP_015915523.1">
    <property type="nucleotide sequence ID" value="NC_011989.1"/>
</dbReference>
<dbReference type="SMR" id="B9JUV4"/>
<dbReference type="STRING" id="311402.Avi_1537"/>
<dbReference type="KEGG" id="avi:Avi_1537"/>
<dbReference type="eggNOG" id="COG0030">
    <property type="taxonomic scope" value="Bacteria"/>
</dbReference>
<dbReference type="HOGENOM" id="CLU_041220_0_1_5"/>
<dbReference type="Proteomes" id="UP000001596">
    <property type="component" value="Chromosome 1"/>
</dbReference>
<dbReference type="GO" id="GO:0005829">
    <property type="term" value="C:cytosol"/>
    <property type="evidence" value="ECO:0007669"/>
    <property type="project" value="TreeGrafter"/>
</dbReference>
<dbReference type="GO" id="GO:0052908">
    <property type="term" value="F:16S rRNA (adenine(1518)-N(6)/adenine(1519)-N(6))-dimethyltransferase activity"/>
    <property type="evidence" value="ECO:0007669"/>
    <property type="project" value="UniProtKB-EC"/>
</dbReference>
<dbReference type="GO" id="GO:0003723">
    <property type="term" value="F:RNA binding"/>
    <property type="evidence" value="ECO:0007669"/>
    <property type="project" value="UniProtKB-KW"/>
</dbReference>
<dbReference type="CDD" id="cd02440">
    <property type="entry name" value="AdoMet_MTases"/>
    <property type="match status" value="1"/>
</dbReference>
<dbReference type="FunFam" id="1.10.8.100:FF:000001">
    <property type="entry name" value="Ribosomal RNA small subunit methyltransferase A"/>
    <property type="match status" value="1"/>
</dbReference>
<dbReference type="Gene3D" id="1.10.8.100">
    <property type="entry name" value="Ribosomal RNA adenine dimethylase-like, domain 2"/>
    <property type="match status" value="1"/>
</dbReference>
<dbReference type="Gene3D" id="3.40.50.150">
    <property type="entry name" value="Vaccinia Virus protein VP39"/>
    <property type="match status" value="1"/>
</dbReference>
<dbReference type="HAMAP" id="MF_00607">
    <property type="entry name" value="16SrRNA_methyltr_A"/>
    <property type="match status" value="1"/>
</dbReference>
<dbReference type="InterPro" id="IPR001737">
    <property type="entry name" value="KsgA/Erm"/>
</dbReference>
<dbReference type="InterPro" id="IPR023165">
    <property type="entry name" value="rRNA_Ade_diMease-like_C"/>
</dbReference>
<dbReference type="InterPro" id="IPR020596">
    <property type="entry name" value="rRNA_Ade_Mease_Trfase_CS"/>
</dbReference>
<dbReference type="InterPro" id="IPR020598">
    <property type="entry name" value="rRNA_Ade_methylase_Trfase_N"/>
</dbReference>
<dbReference type="InterPro" id="IPR011530">
    <property type="entry name" value="rRNA_adenine_dimethylase"/>
</dbReference>
<dbReference type="InterPro" id="IPR029063">
    <property type="entry name" value="SAM-dependent_MTases_sf"/>
</dbReference>
<dbReference type="NCBIfam" id="TIGR00755">
    <property type="entry name" value="ksgA"/>
    <property type="match status" value="1"/>
</dbReference>
<dbReference type="PANTHER" id="PTHR11727">
    <property type="entry name" value="DIMETHYLADENOSINE TRANSFERASE"/>
    <property type="match status" value="1"/>
</dbReference>
<dbReference type="PANTHER" id="PTHR11727:SF7">
    <property type="entry name" value="DIMETHYLADENOSINE TRANSFERASE-RELATED"/>
    <property type="match status" value="1"/>
</dbReference>
<dbReference type="Pfam" id="PF00398">
    <property type="entry name" value="RrnaAD"/>
    <property type="match status" value="1"/>
</dbReference>
<dbReference type="SMART" id="SM00650">
    <property type="entry name" value="rADc"/>
    <property type="match status" value="1"/>
</dbReference>
<dbReference type="SUPFAM" id="SSF53335">
    <property type="entry name" value="S-adenosyl-L-methionine-dependent methyltransferases"/>
    <property type="match status" value="1"/>
</dbReference>
<dbReference type="PROSITE" id="PS01131">
    <property type="entry name" value="RRNA_A_DIMETH"/>
    <property type="match status" value="1"/>
</dbReference>
<dbReference type="PROSITE" id="PS51689">
    <property type="entry name" value="SAM_RNA_A_N6_MT"/>
    <property type="match status" value="1"/>
</dbReference>
<protein>
    <recommendedName>
        <fullName evidence="1">Ribosomal RNA small subunit methyltransferase A</fullName>
        <ecNumber evidence="1">2.1.1.182</ecNumber>
    </recommendedName>
    <alternativeName>
        <fullName evidence="1">16S rRNA (adenine(1518)-N(6)/adenine(1519)-N(6))-dimethyltransferase</fullName>
    </alternativeName>
    <alternativeName>
        <fullName evidence="1">16S rRNA dimethyladenosine transferase</fullName>
    </alternativeName>
    <alternativeName>
        <fullName evidence="1">16S rRNA dimethylase</fullName>
    </alternativeName>
    <alternativeName>
        <fullName evidence="1">S-adenosylmethionine-6-N', N'-adenosyl(rRNA) dimethyltransferase</fullName>
    </alternativeName>
</protein>
<keyword id="KW-0963">Cytoplasm</keyword>
<keyword id="KW-0489">Methyltransferase</keyword>
<keyword id="KW-1185">Reference proteome</keyword>
<keyword id="KW-0694">RNA-binding</keyword>
<keyword id="KW-0698">rRNA processing</keyword>
<keyword id="KW-0949">S-adenosyl-L-methionine</keyword>
<keyword id="KW-0808">Transferase</keyword>
<gene>
    <name evidence="1" type="primary">rsmA</name>
    <name evidence="1" type="synonym">ksgA</name>
    <name type="ordered locus">Avi_1537</name>
</gene>
<accession>B9JUV4</accession>
<evidence type="ECO:0000255" key="1">
    <source>
        <dbReference type="HAMAP-Rule" id="MF_00607"/>
    </source>
</evidence>
<name>RSMA_ALLAM</name>
<sequence length="275" mass="30136">MAALDGLPPLRDVIQRHGLDAKKALGQNFLLDLNITQKVARTAGDLTNATVFEVGPGPGGLTRALLALGAKKVIAIERDSRCLPALAEISDHYPGRLEVIEGDALKTDFEAMAPDGPVKIVANLPYNVGTQLLINWLMPRQWPPFWDSLTLMFQKEVGQRIVAEADDDHYGRLGVLCGWRTEAHMAFDLSPQAFTPPPKVTSTVVHLTPRPAPIPCEIAKLEKLTQAAFGQRRKMLRASLKPLGGEALLNRAEIDPSRRAETLSVEEFCRIANLL</sequence>
<reference key="1">
    <citation type="journal article" date="2009" name="J. Bacteriol.">
        <title>Genome sequences of three Agrobacterium biovars help elucidate the evolution of multichromosome genomes in bacteria.</title>
        <authorList>
            <person name="Slater S.C."/>
            <person name="Goldman B.S."/>
            <person name="Goodner B."/>
            <person name="Setubal J.C."/>
            <person name="Farrand S.K."/>
            <person name="Nester E.W."/>
            <person name="Burr T.J."/>
            <person name="Banta L."/>
            <person name="Dickerman A.W."/>
            <person name="Paulsen I."/>
            <person name="Otten L."/>
            <person name="Suen G."/>
            <person name="Welch R."/>
            <person name="Almeida N.F."/>
            <person name="Arnold F."/>
            <person name="Burton O.T."/>
            <person name="Du Z."/>
            <person name="Ewing A."/>
            <person name="Godsy E."/>
            <person name="Heisel S."/>
            <person name="Houmiel K.L."/>
            <person name="Jhaveri J."/>
            <person name="Lu J."/>
            <person name="Miller N.M."/>
            <person name="Norton S."/>
            <person name="Chen Q."/>
            <person name="Phoolcharoen W."/>
            <person name="Ohlin V."/>
            <person name="Ondrusek D."/>
            <person name="Pride N."/>
            <person name="Stricklin S.L."/>
            <person name="Sun J."/>
            <person name="Wheeler C."/>
            <person name="Wilson L."/>
            <person name="Zhu H."/>
            <person name="Wood D.W."/>
        </authorList>
    </citation>
    <scope>NUCLEOTIDE SEQUENCE [LARGE SCALE GENOMIC DNA]</scope>
    <source>
        <strain>ATCC BAA-846 / DSM 112012 / S4</strain>
    </source>
</reference>
<feature type="chain" id="PRO_1000194375" description="Ribosomal RNA small subunit methyltransferase A">
    <location>
        <begin position="1"/>
        <end position="275"/>
    </location>
</feature>
<feature type="binding site" evidence="1">
    <location>
        <position position="28"/>
    </location>
    <ligand>
        <name>S-adenosyl-L-methionine</name>
        <dbReference type="ChEBI" id="CHEBI:59789"/>
    </ligand>
</feature>
<feature type="binding site" evidence="1">
    <location>
        <position position="30"/>
    </location>
    <ligand>
        <name>S-adenosyl-L-methionine</name>
        <dbReference type="ChEBI" id="CHEBI:59789"/>
    </ligand>
</feature>
<feature type="binding site" evidence="1">
    <location>
        <position position="55"/>
    </location>
    <ligand>
        <name>S-adenosyl-L-methionine</name>
        <dbReference type="ChEBI" id="CHEBI:59789"/>
    </ligand>
</feature>
<feature type="binding site" evidence="1">
    <location>
        <position position="77"/>
    </location>
    <ligand>
        <name>S-adenosyl-L-methionine</name>
        <dbReference type="ChEBI" id="CHEBI:59789"/>
    </ligand>
</feature>
<feature type="binding site" evidence="1">
    <location>
        <position position="103"/>
    </location>
    <ligand>
        <name>S-adenosyl-L-methionine</name>
        <dbReference type="ChEBI" id="CHEBI:59789"/>
    </ligand>
</feature>
<feature type="binding site" evidence="1">
    <location>
        <position position="123"/>
    </location>
    <ligand>
        <name>S-adenosyl-L-methionine</name>
        <dbReference type="ChEBI" id="CHEBI:59789"/>
    </ligand>
</feature>
<organism>
    <name type="scientific">Allorhizobium ampelinum (strain ATCC BAA-846 / DSM 112012 / S4)</name>
    <name type="common">Agrobacterium vitis (strain S4)</name>
    <dbReference type="NCBI Taxonomy" id="311402"/>
    <lineage>
        <taxon>Bacteria</taxon>
        <taxon>Pseudomonadati</taxon>
        <taxon>Pseudomonadota</taxon>
        <taxon>Alphaproteobacteria</taxon>
        <taxon>Hyphomicrobiales</taxon>
        <taxon>Rhizobiaceae</taxon>
        <taxon>Rhizobium/Agrobacterium group</taxon>
        <taxon>Allorhizobium</taxon>
        <taxon>Allorhizobium ampelinum</taxon>
    </lineage>
</organism>